<comment type="function">
    <text evidence="1">Involved in peptide bond synthesis. Stimulates efficient translation and peptide-bond synthesis on native or reconstituted 70S ribosomes in vitro. Probably functions indirectly by altering the affinity of the ribosome for aminoacyl-tRNA, thus increasing their reactivity as acceptors for peptidyl transferase.</text>
</comment>
<comment type="pathway">
    <text evidence="1">Protein biosynthesis; polypeptide chain elongation.</text>
</comment>
<comment type="subcellular location">
    <subcellularLocation>
        <location evidence="1">Cytoplasm</location>
    </subcellularLocation>
</comment>
<comment type="similarity">
    <text evidence="1">Belongs to the elongation factor P family.</text>
</comment>
<keyword id="KW-0963">Cytoplasm</keyword>
<keyword id="KW-0251">Elongation factor</keyword>
<keyword id="KW-0648">Protein biosynthesis</keyword>
<keyword id="KW-1185">Reference proteome</keyword>
<reference key="1">
    <citation type="journal article" date="2007" name="PLoS Genet.">
        <title>Patterns and implications of gene gain and loss in the evolution of Prochlorococcus.</title>
        <authorList>
            <person name="Kettler G.C."/>
            <person name="Martiny A.C."/>
            <person name="Huang K."/>
            <person name="Zucker J."/>
            <person name="Coleman M.L."/>
            <person name="Rodrigue S."/>
            <person name="Chen F."/>
            <person name="Lapidus A."/>
            <person name="Ferriera S."/>
            <person name="Johnson J."/>
            <person name="Steglich C."/>
            <person name="Church G.M."/>
            <person name="Richardson P."/>
            <person name="Chisholm S.W."/>
        </authorList>
    </citation>
    <scope>NUCLEOTIDE SEQUENCE [LARGE SCALE GENOMIC DNA]</scope>
    <source>
        <strain>NATL2A</strain>
    </source>
</reference>
<name>EFP_PROMT</name>
<dbReference type="EMBL" id="CP000095">
    <property type="protein sequence ID" value="AAZ58842.1"/>
    <property type="molecule type" value="Genomic_DNA"/>
</dbReference>
<dbReference type="RefSeq" id="WP_011293986.1">
    <property type="nucleotide sequence ID" value="NC_007335.2"/>
</dbReference>
<dbReference type="SMR" id="Q46I36"/>
<dbReference type="STRING" id="59920.PMN2A_1353"/>
<dbReference type="KEGG" id="pmn:PMN2A_1353"/>
<dbReference type="HOGENOM" id="CLU_074944_0_1_3"/>
<dbReference type="OrthoDB" id="9801844at2"/>
<dbReference type="PhylomeDB" id="Q46I36"/>
<dbReference type="UniPathway" id="UPA00345"/>
<dbReference type="Proteomes" id="UP000002535">
    <property type="component" value="Chromosome"/>
</dbReference>
<dbReference type="GO" id="GO:0005737">
    <property type="term" value="C:cytoplasm"/>
    <property type="evidence" value="ECO:0007669"/>
    <property type="project" value="UniProtKB-SubCell"/>
</dbReference>
<dbReference type="GO" id="GO:0003746">
    <property type="term" value="F:translation elongation factor activity"/>
    <property type="evidence" value="ECO:0007669"/>
    <property type="project" value="UniProtKB-UniRule"/>
</dbReference>
<dbReference type="GO" id="GO:0043043">
    <property type="term" value="P:peptide biosynthetic process"/>
    <property type="evidence" value="ECO:0007669"/>
    <property type="project" value="InterPro"/>
</dbReference>
<dbReference type="CDD" id="cd04470">
    <property type="entry name" value="S1_EF-P_repeat_1"/>
    <property type="match status" value="1"/>
</dbReference>
<dbReference type="CDD" id="cd05794">
    <property type="entry name" value="S1_EF-P_repeat_2"/>
    <property type="match status" value="1"/>
</dbReference>
<dbReference type="FunFam" id="2.30.30.30:FF:000003">
    <property type="entry name" value="Elongation factor P"/>
    <property type="match status" value="1"/>
</dbReference>
<dbReference type="FunFam" id="2.40.50.140:FF:000004">
    <property type="entry name" value="Elongation factor P"/>
    <property type="match status" value="1"/>
</dbReference>
<dbReference type="FunFam" id="2.40.50.140:FF:000009">
    <property type="entry name" value="Elongation factor P"/>
    <property type="match status" value="1"/>
</dbReference>
<dbReference type="Gene3D" id="2.30.30.30">
    <property type="match status" value="1"/>
</dbReference>
<dbReference type="Gene3D" id="2.40.50.140">
    <property type="entry name" value="Nucleic acid-binding proteins"/>
    <property type="match status" value="2"/>
</dbReference>
<dbReference type="HAMAP" id="MF_00141">
    <property type="entry name" value="EF_P"/>
    <property type="match status" value="1"/>
</dbReference>
<dbReference type="InterPro" id="IPR015365">
    <property type="entry name" value="Elong-fact-P_C"/>
</dbReference>
<dbReference type="InterPro" id="IPR012340">
    <property type="entry name" value="NA-bd_OB-fold"/>
</dbReference>
<dbReference type="InterPro" id="IPR014722">
    <property type="entry name" value="Rib_uL2_dom2"/>
</dbReference>
<dbReference type="InterPro" id="IPR020599">
    <property type="entry name" value="Transl_elong_fac_P/YeiP"/>
</dbReference>
<dbReference type="InterPro" id="IPR013185">
    <property type="entry name" value="Transl_elong_KOW-like"/>
</dbReference>
<dbReference type="InterPro" id="IPR001059">
    <property type="entry name" value="Transl_elong_P/YeiP_cen"/>
</dbReference>
<dbReference type="InterPro" id="IPR013852">
    <property type="entry name" value="Transl_elong_P/YeiP_CS"/>
</dbReference>
<dbReference type="InterPro" id="IPR011768">
    <property type="entry name" value="Transl_elongation_fac_P"/>
</dbReference>
<dbReference type="InterPro" id="IPR008991">
    <property type="entry name" value="Translation_prot_SH3-like_sf"/>
</dbReference>
<dbReference type="NCBIfam" id="TIGR00038">
    <property type="entry name" value="efp"/>
    <property type="match status" value="1"/>
</dbReference>
<dbReference type="NCBIfam" id="NF001810">
    <property type="entry name" value="PRK00529.1"/>
    <property type="match status" value="1"/>
</dbReference>
<dbReference type="PANTHER" id="PTHR30053">
    <property type="entry name" value="ELONGATION FACTOR P"/>
    <property type="match status" value="1"/>
</dbReference>
<dbReference type="PANTHER" id="PTHR30053:SF12">
    <property type="entry name" value="ELONGATION FACTOR P (EF-P) FAMILY PROTEIN"/>
    <property type="match status" value="1"/>
</dbReference>
<dbReference type="Pfam" id="PF01132">
    <property type="entry name" value="EFP"/>
    <property type="match status" value="1"/>
</dbReference>
<dbReference type="Pfam" id="PF08207">
    <property type="entry name" value="EFP_N"/>
    <property type="match status" value="1"/>
</dbReference>
<dbReference type="Pfam" id="PF09285">
    <property type="entry name" value="Elong-fact-P_C"/>
    <property type="match status" value="1"/>
</dbReference>
<dbReference type="PIRSF" id="PIRSF005901">
    <property type="entry name" value="EF-P"/>
    <property type="match status" value="1"/>
</dbReference>
<dbReference type="SMART" id="SM01185">
    <property type="entry name" value="EFP"/>
    <property type="match status" value="1"/>
</dbReference>
<dbReference type="SMART" id="SM00841">
    <property type="entry name" value="Elong-fact-P_C"/>
    <property type="match status" value="1"/>
</dbReference>
<dbReference type="SUPFAM" id="SSF50249">
    <property type="entry name" value="Nucleic acid-binding proteins"/>
    <property type="match status" value="2"/>
</dbReference>
<dbReference type="SUPFAM" id="SSF50104">
    <property type="entry name" value="Translation proteins SH3-like domain"/>
    <property type="match status" value="1"/>
</dbReference>
<dbReference type="PROSITE" id="PS01275">
    <property type="entry name" value="EFP"/>
    <property type="match status" value="1"/>
</dbReference>
<gene>
    <name evidence="1" type="primary">efp</name>
    <name type="ordered locus">PMN2A_1353</name>
</gene>
<evidence type="ECO:0000255" key="1">
    <source>
        <dbReference type="HAMAP-Rule" id="MF_00141"/>
    </source>
</evidence>
<accession>Q46I36</accession>
<sequence length="187" mass="20774">MISSNDFRTGTTIELDGAVWRVIEFLHVKPGKGSAFVRTKLKAVVSGNVVEKTFRAGEMVPQALLEKSKLQHTYMDGDDFVFMDMTSYEETRLTAKQIGESRKYLKEGMEVNVVSWNEKPLEVELPNSVVLEIKETDPGVKGDTASGGTKPAILETGAQVMVPLFISIGEKIRVDTRNDSYLGRETQ</sequence>
<protein>
    <recommendedName>
        <fullName evidence="1">Elongation factor P</fullName>
        <shortName evidence="1">EF-P</shortName>
    </recommendedName>
</protein>
<feature type="chain" id="PRO_1000010809" description="Elongation factor P">
    <location>
        <begin position="1"/>
        <end position="187"/>
    </location>
</feature>
<proteinExistence type="inferred from homology"/>
<organism>
    <name type="scientific">Prochlorococcus marinus (strain NATL2A)</name>
    <dbReference type="NCBI Taxonomy" id="59920"/>
    <lineage>
        <taxon>Bacteria</taxon>
        <taxon>Bacillati</taxon>
        <taxon>Cyanobacteriota</taxon>
        <taxon>Cyanophyceae</taxon>
        <taxon>Synechococcales</taxon>
        <taxon>Prochlorococcaceae</taxon>
        <taxon>Prochlorococcus</taxon>
    </lineage>
</organism>